<evidence type="ECO:0000250" key="1">
    <source>
        <dbReference type="UniProtKB" id="P03905"/>
    </source>
</evidence>
<evidence type="ECO:0000250" key="2">
    <source>
        <dbReference type="UniProtKB" id="P03910"/>
    </source>
</evidence>
<evidence type="ECO:0000255" key="3"/>
<evidence type="ECO:0000305" key="4"/>
<protein>
    <recommendedName>
        <fullName>NADH-ubiquinone oxidoreductase chain 4</fullName>
        <ecNumber evidence="1">7.1.1.2</ecNumber>
    </recommendedName>
    <alternativeName>
        <fullName>NADH dehydrogenase subunit 4</fullName>
    </alternativeName>
</protein>
<feature type="chain" id="PRO_0000117975" description="NADH-ubiquinone oxidoreductase chain 4">
    <location>
        <begin position="1"/>
        <end position="459"/>
    </location>
</feature>
<feature type="transmembrane region" description="Helical" evidence="3">
    <location>
        <begin position="22"/>
        <end position="42"/>
    </location>
</feature>
<feature type="transmembrane region" description="Helical" evidence="3">
    <location>
        <begin position="60"/>
        <end position="80"/>
    </location>
</feature>
<feature type="transmembrane region" description="Helical" evidence="3">
    <location>
        <begin position="94"/>
        <end position="110"/>
    </location>
</feature>
<feature type="transmembrane region" description="Helical" evidence="3">
    <location>
        <begin position="113"/>
        <end position="133"/>
    </location>
</feature>
<feature type="transmembrane region" description="Helical" evidence="3">
    <location>
        <begin position="145"/>
        <end position="165"/>
    </location>
</feature>
<feature type="transmembrane region" description="Helical" evidence="3">
    <location>
        <begin position="196"/>
        <end position="216"/>
    </location>
</feature>
<feature type="transmembrane region" description="Helical" evidence="3">
    <location>
        <begin position="224"/>
        <end position="244"/>
    </location>
</feature>
<feature type="transmembrane region" description="Helical" evidence="3">
    <location>
        <begin position="257"/>
        <end position="277"/>
    </location>
</feature>
<feature type="transmembrane region" description="Helical" evidence="3">
    <location>
        <begin position="284"/>
        <end position="303"/>
    </location>
</feature>
<feature type="transmembrane region" description="Helical" evidence="3">
    <location>
        <begin position="308"/>
        <end position="330"/>
    </location>
</feature>
<feature type="transmembrane region" description="Helical" evidence="3">
    <location>
        <begin position="341"/>
        <end position="361"/>
    </location>
</feature>
<feature type="transmembrane region" description="Helical" evidence="3">
    <location>
        <begin position="391"/>
        <end position="411"/>
    </location>
</feature>
<feature type="transmembrane region" description="Helical" evidence="3">
    <location>
        <begin position="436"/>
        <end position="456"/>
    </location>
</feature>
<feature type="sequence conflict" description="In Ref. 2; CAB51802." evidence="4" ref="2">
    <original>A</original>
    <variation>T</variation>
    <location>
        <position position="404"/>
    </location>
</feature>
<feature type="sequence conflict" description="In Ref. 2; CAB51802." evidence="4" ref="2">
    <original>I</original>
    <variation>T</variation>
    <location>
        <position position="412"/>
    </location>
</feature>
<feature type="sequence conflict" description="In Ref. 2; CAB51802." evidence="4" ref="2">
    <original>S</original>
    <variation>T</variation>
    <location>
        <position position="420"/>
    </location>
</feature>
<feature type="sequence conflict" description="In Ref. 2; CAB51802." evidence="4" ref="2">
    <original>S</original>
    <variation>F</variation>
    <location>
        <position position="430"/>
    </location>
</feature>
<feature type="sequence conflict" description="In Ref. 2; CAB51802." evidence="4" ref="2">
    <original>F</original>
    <variation>S</variation>
    <location>
        <position position="442"/>
    </location>
</feature>
<feature type="sequence conflict" description="In Ref. 2; CAB51802." evidence="4" ref="2">
    <original>LT</original>
    <variation>FA</variation>
    <location>
        <begin position="457"/>
        <end position="458"/>
    </location>
</feature>
<sequence length="459" mass="51508">MLKLIIPTVMLLPLTWLSKTHMIWINTTTHSLIISFIPLLFLNQTNSNLSSYSLLFSSDPLSTPLLMLTTWLLPLMIMASQHHLSNEPPSRKKLYLSMLISLQISLIMTFTATELIMFYILFETTLIPTLIIITRWGNQPERLNAGTYFLFYTLVGSLPLLIALTHTHNTLGSLNIMLLTLTARELTDSWSNSLMWLAYTMAFMMKMPLYGVHLWLPKAHVEAPIAGSMVLAAVLLKLGGYGMMRLTIILDPLTKHMAYPFLVLSLWGMIMTSSICLRQTDLKSLIAYSSVSHMALVVAAILIQTPWSFTGATTLMIAHGLTSSLLFCLANSNYERTHSRIMILSQGLQTLLPLMALWWLLASLTNLALPPTINLLGELSVLMAMFSWSNITILLTGLNMLITALYSLYMFITTQRGTPSHHINNMKPSSTRENTLMLMHLFPILLLSLNPSIIAGLTY</sequence>
<geneLocation type="mitochondrion"/>
<organism>
    <name type="scientific">Pongo pygmaeus</name>
    <name type="common">Bornean orangutan</name>
    <dbReference type="NCBI Taxonomy" id="9600"/>
    <lineage>
        <taxon>Eukaryota</taxon>
        <taxon>Metazoa</taxon>
        <taxon>Chordata</taxon>
        <taxon>Craniata</taxon>
        <taxon>Vertebrata</taxon>
        <taxon>Euteleostomi</taxon>
        <taxon>Mammalia</taxon>
        <taxon>Eutheria</taxon>
        <taxon>Euarchontoglires</taxon>
        <taxon>Primates</taxon>
        <taxon>Haplorrhini</taxon>
        <taxon>Catarrhini</taxon>
        <taxon>Hominidae</taxon>
        <taxon>Pongo</taxon>
    </lineage>
</organism>
<comment type="function">
    <text evidence="1">Core subunit of the mitochondrial membrane respiratory chain NADH dehydrogenase (Complex I) which catalyzes electron transfer from NADH through the respiratory chain, using ubiquinone as an electron acceptor. Essential for the catalytic activity and assembly of complex I.</text>
</comment>
<comment type="catalytic activity">
    <reaction evidence="1">
        <text>a ubiquinone + NADH + 5 H(+)(in) = a ubiquinol + NAD(+) + 4 H(+)(out)</text>
        <dbReference type="Rhea" id="RHEA:29091"/>
        <dbReference type="Rhea" id="RHEA-COMP:9565"/>
        <dbReference type="Rhea" id="RHEA-COMP:9566"/>
        <dbReference type="ChEBI" id="CHEBI:15378"/>
        <dbReference type="ChEBI" id="CHEBI:16389"/>
        <dbReference type="ChEBI" id="CHEBI:17976"/>
        <dbReference type="ChEBI" id="CHEBI:57540"/>
        <dbReference type="ChEBI" id="CHEBI:57945"/>
        <dbReference type="EC" id="7.1.1.2"/>
    </reaction>
</comment>
<comment type="subunit">
    <text evidence="2">Core subunit of respiratory chain NADH dehydrogenase (Complex I) which is composed of 45 different subunits.</text>
</comment>
<comment type="subcellular location">
    <subcellularLocation>
        <location evidence="2">Mitochondrion inner membrane</location>
        <topology evidence="3">Multi-pass membrane protein</topology>
    </subcellularLocation>
</comment>
<comment type="similarity">
    <text evidence="4">Belongs to the complex I subunit 4 family.</text>
</comment>
<keyword id="KW-0249">Electron transport</keyword>
<keyword id="KW-0472">Membrane</keyword>
<keyword id="KW-0496">Mitochondrion</keyword>
<keyword id="KW-0999">Mitochondrion inner membrane</keyword>
<keyword id="KW-0520">NAD</keyword>
<keyword id="KW-0679">Respiratory chain</keyword>
<keyword id="KW-1278">Translocase</keyword>
<keyword id="KW-0812">Transmembrane</keyword>
<keyword id="KW-1133">Transmembrane helix</keyword>
<keyword id="KW-0813">Transport</keyword>
<keyword id="KW-0830">Ubiquinone</keyword>
<name>NU4M_PONPY</name>
<reference key="1">
    <citation type="journal article" date="1995" name="Proc. Natl. Acad. Sci. U.S.A.">
        <title>Recent African origin of modern humans revealed by complete sequences of hominoid mitochondrial DNAs.</title>
        <authorList>
            <person name="Horai S."/>
            <person name="Hayasaka K."/>
            <person name="Kondo R."/>
            <person name="Tsugane K."/>
            <person name="Takahata N."/>
        </authorList>
    </citation>
    <scope>NUCLEOTIDE SEQUENCE [GENOMIC DNA]</scope>
</reference>
<reference key="2">
    <citation type="journal article" date="1982" name="J. Mol. Evol.">
        <title>Mitochondrial DNA sequences of primates: tempo and mode of evolution.</title>
        <authorList>
            <person name="Brown W.M."/>
            <person name="Prager E.M."/>
            <person name="Wang A."/>
            <person name="Wilson A.C."/>
        </authorList>
    </citation>
    <scope>NUCLEOTIDE SEQUENCE [GENOMIC DNA] OF 308-459</scope>
</reference>
<dbReference type="EC" id="7.1.1.2" evidence="1"/>
<dbReference type="EMBL" id="D38115">
    <property type="protein sequence ID" value="BAA85291.1"/>
    <property type="molecule type" value="Genomic_DNA"/>
</dbReference>
<dbReference type="EMBL" id="V00675">
    <property type="protein sequence ID" value="CAB51802.1"/>
    <property type="status" value="ALT_TERM"/>
    <property type="molecule type" value="Genomic_DNA"/>
</dbReference>
<dbReference type="PIR" id="A00437">
    <property type="entry name" value="A00437"/>
</dbReference>
<dbReference type="RefSeq" id="NP_008234.1">
    <property type="nucleotide sequence ID" value="NC_001646.1"/>
</dbReference>
<dbReference type="SMR" id="P03908"/>
<dbReference type="GeneID" id="807912"/>
<dbReference type="KEGG" id="ppyg:807912"/>
<dbReference type="CTD" id="4538"/>
<dbReference type="GO" id="GO:0005743">
    <property type="term" value="C:mitochondrial inner membrane"/>
    <property type="evidence" value="ECO:0000250"/>
    <property type="project" value="UniProtKB"/>
</dbReference>
<dbReference type="GO" id="GO:0008137">
    <property type="term" value="F:NADH dehydrogenase (ubiquinone) activity"/>
    <property type="evidence" value="ECO:0000250"/>
    <property type="project" value="UniProtKB"/>
</dbReference>
<dbReference type="GO" id="GO:0048039">
    <property type="term" value="F:ubiquinone binding"/>
    <property type="evidence" value="ECO:0007669"/>
    <property type="project" value="TreeGrafter"/>
</dbReference>
<dbReference type="GO" id="GO:0015990">
    <property type="term" value="P:electron transport coupled proton transport"/>
    <property type="evidence" value="ECO:0007669"/>
    <property type="project" value="TreeGrafter"/>
</dbReference>
<dbReference type="GO" id="GO:0006120">
    <property type="term" value="P:mitochondrial electron transport, NADH to ubiquinone"/>
    <property type="evidence" value="ECO:0000250"/>
    <property type="project" value="UniProtKB"/>
</dbReference>
<dbReference type="GO" id="GO:0032981">
    <property type="term" value="P:mitochondrial respiratory chain complex I assembly"/>
    <property type="evidence" value="ECO:0000250"/>
    <property type="project" value="UniProtKB"/>
</dbReference>
<dbReference type="InterPro" id="IPR000260">
    <property type="entry name" value="NADH4_N"/>
</dbReference>
<dbReference type="InterPro" id="IPR010227">
    <property type="entry name" value="NADH_Q_OxRdtase_chainM/4"/>
</dbReference>
<dbReference type="InterPro" id="IPR003918">
    <property type="entry name" value="NADH_UbQ_OxRdtase"/>
</dbReference>
<dbReference type="InterPro" id="IPR001750">
    <property type="entry name" value="ND/Mrp_TM"/>
</dbReference>
<dbReference type="NCBIfam" id="TIGR01972">
    <property type="entry name" value="NDH_I_M"/>
    <property type="match status" value="1"/>
</dbReference>
<dbReference type="PANTHER" id="PTHR43507">
    <property type="entry name" value="NADH-UBIQUINONE OXIDOREDUCTASE CHAIN 4"/>
    <property type="match status" value="1"/>
</dbReference>
<dbReference type="PANTHER" id="PTHR43507:SF20">
    <property type="entry name" value="NADH-UBIQUINONE OXIDOREDUCTASE CHAIN 4"/>
    <property type="match status" value="1"/>
</dbReference>
<dbReference type="Pfam" id="PF01059">
    <property type="entry name" value="Oxidored_q5_N"/>
    <property type="match status" value="1"/>
</dbReference>
<dbReference type="Pfam" id="PF00361">
    <property type="entry name" value="Proton_antipo_M"/>
    <property type="match status" value="1"/>
</dbReference>
<dbReference type="PRINTS" id="PR01437">
    <property type="entry name" value="NUOXDRDTASE4"/>
</dbReference>
<proteinExistence type="inferred from homology"/>
<accession>P03908</accession>
<accession>Q9T9X4</accession>
<gene>
    <name type="primary">MT-ND4</name>
    <name type="synonym">MTND4</name>
    <name type="synonym">NADH4</name>
    <name type="synonym">ND4</name>
</gene>